<comment type="function">
    <text evidence="1">GTPase-activating protein.</text>
</comment>
<comment type="domain">
    <text>The PH-like region is similar to the PH domain but is not detected by Pfam and PROSITE prediction tools. It is unclear whether it is a real PH domain.</text>
</comment>
<organism>
    <name type="scientific">Dictyostelium discoideum</name>
    <name type="common">Social amoeba</name>
    <dbReference type="NCBI Taxonomy" id="44689"/>
    <lineage>
        <taxon>Eukaryota</taxon>
        <taxon>Amoebozoa</taxon>
        <taxon>Evosea</taxon>
        <taxon>Eumycetozoa</taxon>
        <taxon>Dictyostelia</taxon>
        <taxon>Dictyosteliales</taxon>
        <taxon>Dictyosteliaceae</taxon>
        <taxon>Dictyostelium</taxon>
    </lineage>
</organism>
<feature type="chain" id="PRO_0000377436" description="RhoGEF domain-containing protein gxcH">
    <location>
        <begin position="1"/>
        <end position="928"/>
    </location>
</feature>
<feature type="domain" description="DH" evidence="2">
    <location>
        <begin position="484"/>
        <end position="671"/>
    </location>
</feature>
<feature type="region of interest" description="Disordered" evidence="3">
    <location>
        <begin position="30"/>
        <end position="76"/>
    </location>
</feature>
<feature type="region of interest" description="Disordered" evidence="3">
    <location>
        <begin position="90"/>
        <end position="201"/>
    </location>
</feature>
<feature type="region of interest" description="Disordered" evidence="3">
    <location>
        <begin position="318"/>
        <end position="410"/>
    </location>
</feature>
<feature type="region of interest" description="PH-like">
    <location>
        <begin position="699"/>
        <end position="807"/>
    </location>
</feature>
<feature type="region of interest" description="Disordered" evidence="3">
    <location>
        <begin position="835"/>
        <end position="928"/>
    </location>
</feature>
<feature type="compositionally biased region" description="Low complexity" evidence="3">
    <location>
        <begin position="30"/>
        <end position="48"/>
    </location>
</feature>
<feature type="compositionally biased region" description="Polar residues" evidence="3">
    <location>
        <begin position="93"/>
        <end position="103"/>
    </location>
</feature>
<feature type="compositionally biased region" description="Acidic residues" evidence="3">
    <location>
        <begin position="112"/>
        <end position="123"/>
    </location>
</feature>
<feature type="compositionally biased region" description="Polar residues" evidence="3">
    <location>
        <begin position="129"/>
        <end position="141"/>
    </location>
</feature>
<feature type="compositionally biased region" description="Polar residues" evidence="3">
    <location>
        <begin position="175"/>
        <end position="187"/>
    </location>
</feature>
<feature type="compositionally biased region" description="Polar residues" evidence="3">
    <location>
        <begin position="334"/>
        <end position="367"/>
    </location>
</feature>
<feature type="compositionally biased region" description="Low complexity" evidence="3">
    <location>
        <begin position="377"/>
        <end position="407"/>
    </location>
</feature>
<feature type="compositionally biased region" description="Low complexity" evidence="3">
    <location>
        <begin position="848"/>
        <end position="857"/>
    </location>
</feature>
<reference key="1">
    <citation type="journal article" date="2005" name="Nature">
        <title>The genome of the social amoeba Dictyostelium discoideum.</title>
        <authorList>
            <person name="Eichinger L."/>
            <person name="Pachebat J.A."/>
            <person name="Gloeckner G."/>
            <person name="Rajandream M.A."/>
            <person name="Sucgang R."/>
            <person name="Berriman M."/>
            <person name="Song J."/>
            <person name="Olsen R."/>
            <person name="Szafranski K."/>
            <person name="Xu Q."/>
            <person name="Tunggal B."/>
            <person name="Kummerfeld S."/>
            <person name="Madera M."/>
            <person name="Konfortov B.A."/>
            <person name="Rivero F."/>
            <person name="Bankier A.T."/>
            <person name="Lehmann R."/>
            <person name="Hamlin N."/>
            <person name="Davies R."/>
            <person name="Gaudet P."/>
            <person name="Fey P."/>
            <person name="Pilcher K."/>
            <person name="Chen G."/>
            <person name="Saunders D."/>
            <person name="Sodergren E.J."/>
            <person name="Davis P."/>
            <person name="Kerhornou A."/>
            <person name="Nie X."/>
            <person name="Hall N."/>
            <person name="Anjard C."/>
            <person name="Hemphill L."/>
            <person name="Bason N."/>
            <person name="Farbrother P."/>
            <person name="Desany B."/>
            <person name="Just E."/>
            <person name="Morio T."/>
            <person name="Rost R."/>
            <person name="Churcher C.M."/>
            <person name="Cooper J."/>
            <person name="Haydock S."/>
            <person name="van Driessche N."/>
            <person name="Cronin A."/>
            <person name="Goodhead I."/>
            <person name="Muzny D.M."/>
            <person name="Mourier T."/>
            <person name="Pain A."/>
            <person name="Lu M."/>
            <person name="Harper D."/>
            <person name="Lindsay R."/>
            <person name="Hauser H."/>
            <person name="James K.D."/>
            <person name="Quiles M."/>
            <person name="Madan Babu M."/>
            <person name="Saito T."/>
            <person name="Buchrieser C."/>
            <person name="Wardroper A."/>
            <person name="Felder M."/>
            <person name="Thangavelu M."/>
            <person name="Johnson D."/>
            <person name="Knights A."/>
            <person name="Loulseged H."/>
            <person name="Mungall K.L."/>
            <person name="Oliver K."/>
            <person name="Price C."/>
            <person name="Quail M.A."/>
            <person name="Urushihara H."/>
            <person name="Hernandez J."/>
            <person name="Rabbinowitsch E."/>
            <person name="Steffen D."/>
            <person name="Sanders M."/>
            <person name="Ma J."/>
            <person name="Kohara Y."/>
            <person name="Sharp S."/>
            <person name="Simmonds M.N."/>
            <person name="Spiegler S."/>
            <person name="Tivey A."/>
            <person name="Sugano S."/>
            <person name="White B."/>
            <person name="Walker D."/>
            <person name="Woodward J.R."/>
            <person name="Winckler T."/>
            <person name="Tanaka Y."/>
            <person name="Shaulsky G."/>
            <person name="Schleicher M."/>
            <person name="Weinstock G.M."/>
            <person name="Rosenthal A."/>
            <person name="Cox E.C."/>
            <person name="Chisholm R.L."/>
            <person name="Gibbs R.A."/>
            <person name="Loomis W.F."/>
            <person name="Platzer M."/>
            <person name="Kay R.R."/>
            <person name="Williams J.G."/>
            <person name="Dear P.H."/>
            <person name="Noegel A.A."/>
            <person name="Barrell B.G."/>
            <person name="Kuspa A."/>
        </authorList>
    </citation>
    <scope>NUCLEOTIDE SEQUENCE [LARGE SCALE GENOMIC DNA]</scope>
    <source>
        <strain>AX4</strain>
    </source>
</reference>
<proteinExistence type="inferred from homology"/>
<protein>
    <recommendedName>
        <fullName>RhoGEF domain-containing protein gxcH</fullName>
    </recommendedName>
</protein>
<dbReference type="EMBL" id="AAFI02000111">
    <property type="protein sequence ID" value="EAL63214.1"/>
    <property type="molecule type" value="Genomic_DNA"/>
</dbReference>
<dbReference type="RefSeq" id="XP_636716.1">
    <property type="nucleotide sequence ID" value="XM_631624.1"/>
</dbReference>
<dbReference type="SMR" id="Q54J14"/>
<dbReference type="STRING" id="44689.Q54J14"/>
<dbReference type="PaxDb" id="44689-DDB0233496"/>
<dbReference type="EnsemblProtists" id="EAL63214">
    <property type="protein sequence ID" value="EAL63214"/>
    <property type="gene ID" value="DDB_G0288377"/>
</dbReference>
<dbReference type="GeneID" id="8626592"/>
<dbReference type="KEGG" id="ddi:DDB_G0288377"/>
<dbReference type="dictyBase" id="DDB_G0288377">
    <property type="gene designation" value="gxcH"/>
</dbReference>
<dbReference type="VEuPathDB" id="AmoebaDB:DDB_G0288377"/>
<dbReference type="eggNOG" id="KOG3519">
    <property type="taxonomic scope" value="Eukaryota"/>
</dbReference>
<dbReference type="HOGENOM" id="CLU_315099_0_0_1"/>
<dbReference type="InParanoid" id="Q54J14"/>
<dbReference type="PRO" id="PR:Q54J14"/>
<dbReference type="Proteomes" id="UP000002195">
    <property type="component" value="Chromosome 5"/>
</dbReference>
<dbReference type="GO" id="GO:0005737">
    <property type="term" value="C:cytoplasm"/>
    <property type="evidence" value="ECO:0000318"/>
    <property type="project" value="GO_Central"/>
</dbReference>
<dbReference type="GO" id="GO:0005085">
    <property type="term" value="F:guanyl-nucleotide exchange factor activity"/>
    <property type="evidence" value="ECO:0000318"/>
    <property type="project" value="GO_Central"/>
</dbReference>
<dbReference type="Gene3D" id="1.20.900.10">
    <property type="entry name" value="Dbl homology (DH) domain"/>
    <property type="match status" value="1"/>
</dbReference>
<dbReference type="InterPro" id="IPR035899">
    <property type="entry name" value="DBL_dom_sf"/>
</dbReference>
<dbReference type="InterPro" id="IPR000219">
    <property type="entry name" value="DH_dom"/>
</dbReference>
<dbReference type="InterPro" id="IPR051092">
    <property type="entry name" value="FYVE_RhoGEF_PH"/>
</dbReference>
<dbReference type="PANTHER" id="PTHR12673">
    <property type="entry name" value="FACIOGENITAL DYSPLASIA PROTEIN"/>
    <property type="match status" value="1"/>
</dbReference>
<dbReference type="PANTHER" id="PTHR12673:SF254">
    <property type="entry name" value="RHOGEF DOMAIN-CONTAINING PROTEIN GXCH"/>
    <property type="match status" value="1"/>
</dbReference>
<dbReference type="Pfam" id="PF00621">
    <property type="entry name" value="RhoGEF"/>
    <property type="match status" value="1"/>
</dbReference>
<dbReference type="SMART" id="SM00325">
    <property type="entry name" value="RhoGEF"/>
    <property type="match status" value="1"/>
</dbReference>
<dbReference type="SUPFAM" id="SSF48065">
    <property type="entry name" value="DBL homology domain (DH-domain)"/>
    <property type="match status" value="1"/>
</dbReference>
<dbReference type="PROSITE" id="PS50010">
    <property type="entry name" value="DH_2"/>
    <property type="match status" value="1"/>
</dbReference>
<keyword id="KW-0344">Guanine-nucleotide releasing factor</keyword>
<keyword id="KW-1185">Reference proteome</keyword>
<evidence type="ECO:0000250" key="1"/>
<evidence type="ECO:0000255" key="2">
    <source>
        <dbReference type="PROSITE-ProRule" id="PRU00062"/>
    </source>
</evidence>
<evidence type="ECO:0000256" key="3">
    <source>
        <dbReference type="SAM" id="MobiDB-lite"/>
    </source>
</evidence>
<name>GXCH_DICDI</name>
<accession>Q54J14</accession>
<sequence length="928" mass="105842">MENINIEYGIDSNLNLDKFQDNEMEIKNLSKSFDNNNNNNSNTNNIKNNNRERSRRKSLSMPLLEPLPKPKRPPVPPRAFLMNDGADEKITNYIPTTPPSINITFEKKEDGDNYDDNYDDNYSGEDIKTSTTPPQFNSPEFNKNKPLPPIPIDQEKEDYHTMAPKPLPRVPSKIETFNDQNNNEGLQNSTSPLSSSPPPLGNLLNTSNGWRSANKPIDSSFSNIAPKRSTTLFDVTNPTIFPSSLNSSGSCCSSSGSGGKSPSNFLNFEPSKPNFENFDDYVFGNDSSELSQSQISPVVRTRRQRVFTRKAATMKLLDNGVDTDDENESELSKKSGTTLDSEPNLKSVSSSNRGSFVISKSSYNLRGSCSDEDDQENQTTNKNNSNNNNNNTTTNNNNNNNNNNNNNKDTLKVTETKHGRTVSLPEEPVSTLIPNATVSKKRPSLFNKFDFKSVIFEKIEEQQQKFESIPSRRSQLPYINDSTIFNKVVKEIIETEADYLDHMEITINFYLFAALEMVKYKILEKRDIFSIFSNFEEVYHISLKIYPMLLNCIPLLEKNQYPNIEEVFLFNSKSFQRYGSYLSSHDSCNKFLQEILLTNQTAAQIFQKLIPICKLNNLHSFLIKPCQRLCKYPLLLKELSKALPKEDEQNHKTIKRTTSLMGKIVSDINGKMKNDTKIQEIIKEIGTKDIEYLLHHQTFIGEGKVKKVNKNGSTSEGTLYLFNQRIVFAEKNSLFNKKATVISLSNISRVCDYDYRYPSGFAIYHNSKKVSTSSSSNLGTLSLGALIIISDEKLKWMNKIEDQIVSERVLAGTYTYVTNHFESFKNLENCSFSQSDSQSDFVDHDIQQEQQEQQQQQQEEEQTRVKIPQIVEPLSQQHDQPKLDHQQSSIQPKLSFPHLKQPKQDEKPIKKPKSPKHKNTEPENFSFY</sequence>
<gene>
    <name type="primary">gxcH</name>
    <name type="ORF">DDB_0187910</name>
    <name type="ORF">DDB_0233496</name>
</gene>